<organism>
    <name type="scientific">Anaeromyxobacter dehalogenans (strain 2CP-1 / ATCC BAA-258)</name>
    <dbReference type="NCBI Taxonomy" id="455488"/>
    <lineage>
        <taxon>Bacteria</taxon>
        <taxon>Pseudomonadati</taxon>
        <taxon>Myxococcota</taxon>
        <taxon>Myxococcia</taxon>
        <taxon>Myxococcales</taxon>
        <taxon>Cystobacterineae</taxon>
        <taxon>Anaeromyxobacteraceae</taxon>
        <taxon>Anaeromyxobacter</taxon>
    </lineage>
</organism>
<dbReference type="EMBL" id="CP001359">
    <property type="protein sequence ID" value="ACL66042.1"/>
    <property type="molecule type" value="Genomic_DNA"/>
</dbReference>
<dbReference type="RefSeq" id="WP_012526618.1">
    <property type="nucleotide sequence ID" value="NC_011891.1"/>
</dbReference>
<dbReference type="SMR" id="B8JDJ3"/>
<dbReference type="KEGG" id="acp:A2cp1_2705"/>
<dbReference type="HOGENOM" id="CLU_064548_7_0_7"/>
<dbReference type="Proteomes" id="UP000007089">
    <property type="component" value="Chromosome"/>
</dbReference>
<dbReference type="GO" id="GO:1990904">
    <property type="term" value="C:ribonucleoprotein complex"/>
    <property type="evidence" value="ECO:0007669"/>
    <property type="project" value="UniProtKB-KW"/>
</dbReference>
<dbReference type="GO" id="GO:0005840">
    <property type="term" value="C:ribosome"/>
    <property type="evidence" value="ECO:0007669"/>
    <property type="project" value="UniProtKB-KW"/>
</dbReference>
<dbReference type="GO" id="GO:0003735">
    <property type="term" value="F:structural constituent of ribosome"/>
    <property type="evidence" value="ECO:0007669"/>
    <property type="project" value="InterPro"/>
</dbReference>
<dbReference type="GO" id="GO:0006412">
    <property type="term" value="P:translation"/>
    <property type="evidence" value="ECO:0007669"/>
    <property type="project" value="UniProtKB-UniRule"/>
</dbReference>
<dbReference type="Gene3D" id="2.20.150.30">
    <property type="match status" value="1"/>
</dbReference>
<dbReference type="Gene3D" id="2.30.170.40">
    <property type="entry name" value="Ribosomal protein L28/L24"/>
    <property type="match status" value="1"/>
</dbReference>
<dbReference type="HAMAP" id="MF_00373">
    <property type="entry name" value="Ribosomal_bL28"/>
    <property type="match status" value="1"/>
</dbReference>
<dbReference type="InterPro" id="IPR050096">
    <property type="entry name" value="Bacterial_rp_bL28"/>
</dbReference>
<dbReference type="InterPro" id="IPR026569">
    <property type="entry name" value="Ribosomal_bL28"/>
</dbReference>
<dbReference type="InterPro" id="IPR034704">
    <property type="entry name" value="Ribosomal_bL28/bL31-like_sf"/>
</dbReference>
<dbReference type="InterPro" id="IPR001383">
    <property type="entry name" value="Ribosomal_bL28_bact-type"/>
</dbReference>
<dbReference type="InterPro" id="IPR037147">
    <property type="entry name" value="Ribosomal_bL28_sf"/>
</dbReference>
<dbReference type="NCBIfam" id="TIGR00009">
    <property type="entry name" value="L28"/>
    <property type="match status" value="1"/>
</dbReference>
<dbReference type="PANTHER" id="PTHR39080">
    <property type="entry name" value="50S RIBOSOMAL PROTEIN L28"/>
    <property type="match status" value="1"/>
</dbReference>
<dbReference type="PANTHER" id="PTHR39080:SF1">
    <property type="entry name" value="LARGE RIBOSOMAL SUBUNIT PROTEIN BL28A"/>
    <property type="match status" value="1"/>
</dbReference>
<dbReference type="Pfam" id="PF00830">
    <property type="entry name" value="Ribosomal_L28"/>
    <property type="match status" value="1"/>
</dbReference>
<dbReference type="SUPFAM" id="SSF143800">
    <property type="entry name" value="L28p-like"/>
    <property type="match status" value="1"/>
</dbReference>
<feature type="chain" id="PRO_1000195898" description="Large ribosomal subunit protein bL28">
    <location>
        <begin position="1"/>
        <end position="73"/>
    </location>
</feature>
<gene>
    <name evidence="1" type="primary">rpmB</name>
    <name type="ordered locus">A2cp1_2705</name>
</gene>
<accession>B8JDJ3</accession>
<reference key="1">
    <citation type="submission" date="2009-01" db="EMBL/GenBank/DDBJ databases">
        <title>Complete sequence of Anaeromyxobacter dehalogenans 2CP-1.</title>
        <authorList>
            <person name="Lucas S."/>
            <person name="Copeland A."/>
            <person name="Lapidus A."/>
            <person name="Glavina del Rio T."/>
            <person name="Dalin E."/>
            <person name="Tice H."/>
            <person name="Bruce D."/>
            <person name="Goodwin L."/>
            <person name="Pitluck S."/>
            <person name="Saunders E."/>
            <person name="Brettin T."/>
            <person name="Detter J.C."/>
            <person name="Han C."/>
            <person name="Larimer F."/>
            <person name="Land M."/>
            <person name="Hauser L."/>
            <person name="Kyrpides N."/>
            <person name="Ovchinnikova G."/>
            <person name="Beliaev A.S."/>
            <person name="Richardson P."/>
        </authorList>
    </citation>
    <scope>NUCLEOTIDE SEQUENCE [LARGE SCALE GENOMIC DNA]</scope>
    <source>
        <strain>2CP-1 / ATCC BAA-258</strain>
    </source>
</reference>
<keyword id="KW-0687">Ribonucleoprotein</keyword>
<keyword id="KW-0689">Ribosomal protein</keyword>
<protein>
    <recommendedName>
        <fullName evidence="1">Large ribosomal subunit protein bL28</fullName>
    </recommendedName>
    <alternativeName>
        <fullName evidence="2">50S ribosomal protein L28</fullName>
    </alternativeName>
</protein>
<evidence type="ECO:0000255" key="1">
    <source>
        <dbReference type="HAMAP-Rule" id="MF_00373"/>
    </source>
</evidence>
<evidence type="ECO:0000305" key="2"/>
<proteinExistence type="inferred from homology"/>
<sequence length="73" mass="7821">MARRCEICGKGPLVGNTVSHANNKNKTRSLPNLRSVRANLAGEIRHIRVCTRCLKAGKVVKAGRGRPTASAQA</sequence>
<comment type="similarity">
    <text evidence="1">Belongs to the bacterial ribosomal protein bL28 family.</text>
</comment>
<name>RL28_ANAD2</name>